<name>YGY5_YEAST</name>
<organism>
    <name type="scientific">Saccharomyces cerevisiae (strain ATCC 204508 / S288c)</name>
    <name type="common">Baker's yeast</name>
    <dbReference type="NCBI Taxonomy" id="559292"/>
    <lineage>
        <taxon>Eukaryota</taxon>
        <taxon>Fungi</taxon>
        <taxon>Dikarya</taxon>
        <taxon>Ascomycota</taxon>
        <taxon>Saccharomycotina</taxon>
        <taxon>Saccharomycetes</taxon>
        <taxon>Saccharomycetales</taxon>
        <taxon>Saccharomycetaceae</taxon>
        <taxon>Saccharomyces</taxon>
    </lineage>
</organism>
<sequence length="178" mass="19334">MTLWPHPGSYKIKSATLFCSRDKLGCAFLSESSLCMYFLYNSLSIWALGPHTAGPLLLFSILNCTPARSVTLPISPSRASISFTRMPLPTPPIEGLHEHLPISVNDGVMRVVCAPVLDDAAAASQPACPAPMTTTCVLVVGWKLVKEDMVNRLLRTCKGNEVHEDAKVVTRSIVLWGV</sequence>
<protein>
    <recommendedName>
        <fullName>Uncharacterized protein YGL235W</fullName>
    </recommendedName>
</protein>
<accession>P53071</accession>
<accession>D6VV99</accession>
<proteinExistence type="predicted"/>
<dbReference type="EMBL" id="Z72758">
    <property type="protein sequence ID" value="CAA96954.1"/>
    <property type="molecule type" value="Genomic_DNA"/>
</dbReference>
<dbReference type="EMBL" id="BK006941">
    <property type="protein sequence ID" value="DAA07883.1"/>
    <property type="molecule type" value="Genomic_DNA"/>
</dbReference>
<dbReference type="PIR" id="S64257">
    <property type="entry name" value="S64257"/>
</dbReference>
<dbReference type="RefSeq" id="NP_011279.1">
    <property type="nucleotide sequence ID" value="NM_001181101.1"/>
</dbReference>
<dbReference type="BioGRID" id="33003">
    <property type="interactions" value="380"/>
</dbReference>
<dbReference type="DIP" id="DIP-8156N"/>
<dbReference type="FunCoup" id="P53071">
    <property type="interactions" value="19"/>
</dbReference>
<dbReference type="STRING" id="4932.YGL235W"/>
<dbReference type="GlyGen" id="P53071">
    <property type="glycosylation" value="1 site"/>
</dbReference>
<dbReference type="iPTMnet" id="P53071"/>
<dbReference type="PaxDb" id="4932-YGL235W"/>
<dbReference type="PeptideAtlas" id="P53071"/>
<dbReference type="EnsemblFungi" id="YGL235W_mRNA">
    <property type="protein sequence ID" value="YGL235W"/>
    <property type="gene ID" value="YGL235W"/>
</dbReference>
<dbReference type="GeneID" id="852615"/>
<dbReference type="KEGG" id="sce:YGL235W"/>
<dbReference type="AGR" id="SGD:S000003204"/>
<dbReference type="SGD" id="S000003204">
    <property type="gene designation" value="YGL235W"/>
</dbReference>
<dbReference type="VEuPathDB" id="FungiDB:YGL235W"/>
<dbReference type="HOGENOM" id="CLU_1807309_0_0_1"/>
<dbReference type="InParanoid" id="P53071"/>
<dbReference type="OMA" id="KLGCAFL"/>
<dbReference type="OrthoDB" id="4047027at2759"/>
<dbReference type="BioCyc" id="YEAST:G3O-30708-MONOMER"/>
<dbReference type="BioGRID-ORCS" id="852615">
    <property type="hits" value="0 hits in 10 CRISPR screens"/>
</dbReference>
<dbReference type="PRO" id="PR:P53071"/>
<dbReference type="Proteomes" id="UP000002311">
    <property type="component" value="Chromosome VII"/>
</dbReference>
<dbReference type="RNAct" id="P53071">
    <property type="molecule type" value="protein"/>
</dbReference>
<reference key="1">
    <citation type="journal article" date="1997" name="Nature">
        <title>The nucleotide sequence of Saccharomyces cerevisiae chromosome VII.</title>
        <authorList>
            <person name="Tettelin H."/>
            <person name="Agostoni-Carbone M.L."/>
            <person name="Albermann K."/>
            <person name="Albers M."/>
            <person name="Arroyo J."/>
            <person name="Backes U."/>
            <person name="Barreiros T."/>
            <person name="Bertani I."/>
            <person name="Bjourson A.J."/>
            <person name="Brueckner M."/>
            <person name="Bruschi C.V."/>
            <person name="Carignani G."/>
            <person name="Castagnoli L."/>
            <person name="Cerdan E."/>
            <person name="Clemente M.L."/>
            <person name="Coblenz A."/>
            <person name="Coglievina M."/>
            <person name="Coissac E."/>
            <person name="Defoor E."/>
            <person name="Del Bino S."/>
            <person name="Delius H."/>
            <person name="Delneri D."/>
            <person name="de Wergifosse P."/>
            <person name="Dujon B."/>
            <person name="Durand P."/>
            <person name="Entian K.-D."/>
            <person name="Eraso P."/>
            <person name="Escribano V."/>
            <person name="Fabiani L."/>
            <person name="Fartmann B."/>
            <person name="Feroli F."/>
            <person name="Feuermann M."/>
            <person name="Frontali L."/>
            <person name="Garcia-Gonzalez M."/>
            <person name="Garcia-Saez M.I."/>
            <person name="Goffeau A."/>
            <person name="Guerreiro P."/>
            <person name="Hani J."/>
            <person name="Hansen M."/>
            <person name="Hebling U."/>
            <person name="Hernandez K."/>
            <person name="Heumann K."/>
            <person name="Hilger F."/>
            <person name="Hofmann B."/>
            <person name="Indge K.J."/>
            <person name="James C.M."/>
            <person name="Klima R."/>
            <person name="Koetter P."/>
            <person name="Kramer B."/>
            <person name="Kramer W."/>
            <person name="Lauquin G."/>
            <person name="Leuther H."/>
            <person name="Louis E.J."/>
            <person name="Maillier E."/>
            <person name="Marconi A."/>
            <person name="Martegani E."/>
            <person name="Mazon M.J."/>
            <person name="Mazzoni C."/>
            <person name="McReynolds A.D.K."/>
            <person name="Melchioretto P."/>
            <person name="Mewes H.-W."/>
            <person name="Minenkova O."/>
            <person name="Mueller-Auer S."/>
            <person name="Nawrocki A."/>
            <person name="Netter P."/>
            <person name="Neu R."/>
            <person name="Nombela C."/>
            <person name="Oliver S.G."/>
            <person name="Panzeri L."/>
            <person name="Paoluzi S."/>
            <person name="Plevani P."/>
            <person name="Portetelle D."/>
            <person name="Portillo F."/>
            <person name="Potier S."/>
            <person name="Purnelle B."/>
            <person name="Rieger M."/>
            <person name="Riles L."/>
            <person name="Rinaldi T."/>
            <person name="Robben J."/>
            <person name="Rodrigues-Pousada C."/>
            <person name="Rodriguez-Belmonte E."/>
            <person name="Rodriguez-Torres A.M."/>
            <person name="Rose M."/>
            <person name="Ruzzi M."/>
            <person name="Saliola M."/>
            <person name="Sanchez-Perez M."/>
            <person name="Schaefer B."/>
            <person name="Schaefer M."/>
            <person name="Scharfe M."/>
            <person name="Schmidheini T."/>
            <person name="Schreer A."/>
            <person name="Skala J."/>
            <person name="Souciet J.-L."/>
            <person name="Steensma H.Y."/>
            <person name="Talla E."/>
            <person name="Thierry A."/>
            <person name="Vandenbol M."/>
            <person name="van der Aart Q.J.M."/>
            <person name="Van Dyck L."/>
            <person name="Vanoni M."/>
            <person name="Verhasselt P."/>
            <person name="Voet M."/>
            <person name="Volckaert G."/>
            <person name="Wambutt R."/>
            <person name="Watson M.D."/>
            <person name="Weber N."/>
            <person name="Wedler E."/>
            <person name="Wedler H."/>
            <person name="Wipfli P."/>
            <person name="Wolf K."/>
            <person name="Wright L.F."/>
            <person name="Zaccaria P."/>
            <person name="Zimmermann M."/>
            <person name="Zollner A."/>
            <person name="Kleine K."/>
        </authorList>
    </citation>
    <scope>NUCLEOTIDE SEQUENCE [LARGE SCALE GENOMIC DNA]</scope>
    <source>
        <strain>ATCC 204508 / S288c</strain>
    </source>
</reference>
<reference key="2">
    <citation type="journal article" date="2014" name="G3 (Bethesda)">
        <title>The reference genome sequence of Saccharomyces cerevisiae: Then and now.</title>
        <authorList>
            <person name="Engel S.R."/>
            <person name="Dietrich F.S."/>
            <person name="Fisk D.G."/>
            <person name="Binkley G."/>
            <person name="Balakrishnan R."/>
            <person name="Costanzo M.C."/>
            <person name="Dwight S.S."/>
            <person name="Hitz B.C."/>
            <person name="Karra K."/>
            <person name="Nash R.S."/>
            <person name="Weng S."/>
            <person name="Wong E.D."/>
            <person name="Lloyd P."/>
            <person name="Skrzypek M.S."/>
            <person name="Miyasato S.R."/>
            <person name="Simison M."/>
            <person name="Cherry J.M."/>
        </authorList>
    </citation>
    <scope>GENOME REANNOTATION</scope>
    <source>
        <strain>ATCC 204508 / S288c</strain>
    </source>
</reference>
<feature type="chain" id="PRO_0000202710" description="Uncharacterized protein YGL235W">
    <location>
        <begin position="1"/>
        <end position="178"/>
    </location>
</feature>
<keyword id="KW-1185">Reference proteome</keyword>
<gene>
    <name type="ordered locus">YGL235W</name>
</gene>